<organism>
    <name type="scientific">Gluconacetobacter diazotrophicus (strain ATCC 49037 / DSM 5601 / CCUG 37298 / CIP 103539 / LMG 7603 / PAl5)</name>
    <dbReference type="NCBI Taxonomy" id="272568"/>
    <lineage>
        <taxon>Bacteria</taxon>
        <taxon>Pseudomonadati</taxon>
        <taxon>Pseudomonadota</taxon>
        <taxon>Alphaproteobacteria</taxon>
        <taxon>Acetobacterales</taxon>
        <taxon>Acetobacteraceae</taxon>
        <taxon>Gluconacetobacter</taxon>
    </lineage>
</organism>
<feature type="chain" id="PRO_0000375572" description="Succinyl-diaminopimelate desuccinylase">
    <location>
        <begin position="1"/>
        <end position="385"/>
    </location>
</feature>
<feature type="active site" evidence="1">
    <location>
        <position position="80"/>
    </location>
</feature>
<feature type="active site" description="Proton acceptor" evidence="1">
    <location>
        <position position="144"/>
    </location>
</feature>
<feature type="binding site" evidence="1">
    <location>
        <position position="78"/>
    </location>
    <ligand>
        <name>Zn(2+)</name>
        <dbReference type="ChEBI" id="CHEBI:29105"/>
        <label>1</label>
    </ligand>
</feature>
<feature type="binding site" evidence="1">
    <location>
        <position position="110"/>
    </location>
    <ligand>
        <name>Zn(2+)</name>
        <dbReference type="ChEBI" id="CHEBI:29105"/>
        <label>1</label>
    </ligand>
</feature>
<feature type="binding site" evidence="1">
    <location>
        <position position="110"/>
    </location>
    <ligand>
        <name>Zn(2+)</name>
        <dbReference type="ChEBI" id="CHEBI:29105"/>
        <label>2</label>
    </ligand>
</feature>
<feature type="binding site" evidence="1">
    <location>
        <position position="145"/>
    </location>
    <ligand>
        <name>Zn(2+)</name>
        <dbReference type="ChEBI" id="CHEBI:29105"/>
        <label>2</label>
    </ligand>
</feature>
<feature type="binding site" evidence="1">
    <location>
        <position position="173"/>
    </location>
    <ligand>
        <name>Zn(2+)</name>
        <dbReference type="ChEBI" id="CHEBI:29105"/>
        <label>1</label>
    </ligand>
</feature>
<feature type="binding site" evidence="1">
    <location>
        <position position="358"/>
    </location>
    <ligand>
        <name>Zn(2+)</name>
        <dbReference type="ChEBI" id="CHEBI:29105"/>
        <label>2</label>
    </ligand>
</feature>
<feature type="sequence conflict" description="In Ref. 2; ACI50146." evidence="2" ref="2">
    <original>C</original>
    <variation>R</variation>
    <location>
        <position position="102"/>
    </location>
</feature>
<gene>
    <name evidence="1" type="primary">dapE</name>
    <name type="ordered locus">GDI2131</name>
    <name type="ordered locus">Gdia_0350</name>
</gene>
<reference key="1">
    <citation type="journal article" date="2009" name="BMC Genomics">
        <title>Complete genome sequence of the sugarcane nitrogen-fixing endophyte Gluconacetobacter diazotrophicus Pal5.</title>
        <authorList>
            <person name="Bertalan M."/>
            <person name="Albano R."/>
            <person name="de Padua V."/>
            <person name="Rouws L."/>
            <person name="Rojas C."/>
            <person name="Hemerly A."/>
            <person name="Teixeira K."/>
            <person name="Schwab S."/>
            <person name="Araujo J."/>
            <person name="Oliveira A."/>
            <person name="Franca L."/>
            <person name="Magalhaes V."/>
            <person name="Alqueres S."/>
            <person name="Cardoso A."/>
            <person name="Almeida W."/>
            <person name="Loureiro M.M."/>
            <person name="Nogueira E."/>
            <person name="Cidade D."/>
            <person name="Oliveira D."/>
            <person name="Simao T."/>
            <person name="Macedo J."/>
            <person name="Valadao A."/>
            <person name="Dreschsel M."/>
            <person name="Freitas F."/>
            <person name="Vidal M."/>
            <person name="Guedes H."/>
            <person name="Rodrigues E."/>
            <person name="Meneses C."/>
            <person name="Brioso P."/>
            <person name="Pozzer L."/>
            <person name="Figueiredo D."/>
            <person name="Montano H."/>
            <person name="Junior J."/>
            <person name="de Souza Filho G."/>
            <person name="Martin Quintana Flores V."/>
            <person name="Ferreira B."/>
            <person name="Branco A."/>
            <person name="Gonzalez P."/>
            <person name="Guillobel H."/>
            <person name="Lemos M."/>
            <person name="Seibel L."/>
            <person name="Macedo J."/>
            <person name="Alves-Ferreira M."/>
            <person name="Sachetto-Martins G."/>
            <person name="Coelho A."/>
            <person name="Santos E."/>
            <person name="Amaral G."/>
            <person name="Neves A."/>
            <person name="Pacheco A.B."/>
            <person name="Carvalho D."/>
            <person name="Lery L."/>
            <person name="Bisch P."/>
            <person name="Rossle S.C."/>
            <person name="Urmenyi T."/>
            <person name="Rael Pereira A."/>
            <person name="Silva R."/>
            <person name="Rondinelli E."/>
            <person name="von Kruger W."/>
            <person name="Martins O."/>
            <person name="Baldani J.I."/>
            <person name="Ferreira P.C."/>
        </authorList>
    </citation>
    <scope>NUCLEOTIDE SEQUENCE [LARGE SCALE GENOMIC DNA]</scope>
    <source>
        <strain>ATCC 49037 / DSM 5601 / CCUG 37298 / CIP 103539 / LMG 7603 / PAl5</strain>
    </source>
</reference>
<reference key="2">
    <citation type="journal article" date="2010" name="Stand. Genomic Sci.">
        <title>Two genome sequences of the same bacterial strain, Gluconacetobacter diazotrophicus PAl 5, suggest a new standard in genome sequence submission.</title>
        <authorList>
            <person name="Giongo A."/>
            <person name="Tyler H.L."/>
            <person name="Zipperer U.N."/>
            <person name="Triplett E.W."/>
        </authorList>
    </citation>
    <scope>NUCLEOTIDE SEQUENCE [LARGE SCALE GENOMIC DNA]</scope>
    <source>
        <strain>ATCC 49037 / DSM 5601 / CCUG 37298 / CIP 103539 / LMG 7603 / PAl5</strain>
    </source>
</reference>
<comment type="function">
    <text evidence="1">Catalyzes the hydrolysis of N-succinyl-L,L-diaminopimelic acid (SDAP), forming succinate and LL-2,6-diaminopimelate (DAP), an intermediate involved in the bacterial biosynthesis of lysine and meso-diaminopimelic acid, an essential component of bacterial cell walls.</text>
</comment>
<comment type="catalytic activity">
    <reaction evidence="1">
        <text>N-succinyl-(2S,6S)-2,6-diaminopimelate + H2O = (2S,6S)-2,6-diaminopimelate + succinate</text>
        <dbReference type="Rhea" id="RHEA:22608"/>
        <dbReference type="ChEBI" id="CHEBI:15377"/>
        <dbReference type="ChEBI" id="CHEBI:30031"/>
        <dbReference type="ChEBI" id="CHEBI:57609"/>
        <dbReference type="ChEBI" id="CHEBI:58087"/>
        <dbReference type="EC" id="3.5.1.18"/>
    </reaction>
</comment>
<comment type="cofactor">
    <cofactor evidence="1">
        <name>Zn(2+)</name>
        <dbReference type="ChEBI" id="CHEBI:29105"/>
    </cofactor>
    <cofactor evidence="1">
        <name>Co(2+)</name>
        <dbReference type="ChEBI" id="CHEBI:48828"/>
    </cofactor>
    <text evidence="1">Binds 2 Zn(2+) or Co(2+) ions per subunit.</text>
</comment>
<comment type="pathway">
    <text evidence="1">Amino-acid biosynthesis; L-lysine biosynthesis via DAP pathway; LL-2,6-diaminopimelate from (S)-tetrahydrodipicolinate (succinylase route): step 3/3.</text>
</comment>
<comment type="subunit">
    <text evidence="1">Homodimer.</text>
</comment>
<comment type="similarity">
    <text evidence="1">Belongs to the peptidase M20A family. DapE subfamily.</text>
</comment>
<dbReference type="EC" id="3.5.1.18" evidence="1"/>
<dbReference type="EMBL" id="AM889285">
    <property type="protein sequence ID" value="CAP56074.1"/>
    <property type="molecule type" value="Genomic_DNA"/>
</dbReference>
<dbReference type="EMBL" id="CP001189">
    <property type="protein sequence ID" value="ACI50146.1"/>
    <property type="molecule type" value="Genomic_DNA"/>
</dbReference>
<dbReference type="RefSeq" id="WP_012225922.1">
    <property type="nucleotide sequence ID" value="NC_010125.1"/>
</dbReference>
<dbReference type="RefSeq" id="WP_012553078.1">
    <property type="nucleotide sequence ID" value="NC_011365.1"/>
</dbReference>
<dbReference type="SMR" id="A9HKR2"/>
<dbReference type="STRING" id="272568.GDI2131"/>
<dbReference type="KEGG" id="gdi:GDI2131"/>
<dbReference type="KEGG" id="gdj:Gdia_0350"/>
<dbReference type="eggNOG" id="COG0624">
    <property type="taxonomic scope" value="Bacteria"/>
</dbReference>
<dbReference type="HOGENOM" id="CLU_021802_4_0_5"/>
<dbReference type="OrthoDB" id="9809784at2"/>
<dbReference type="UniPathway" id="UPA00034">
    <property type="reaction ID" value="UER00021"/>
</dbReference>
<dbReference type="Proteomes" id="UP000001176">
    <property type="component" value="Chromosome"/>
</dbReference>
<dbReference type="GO" id="GO:0008777">
    <property type="term" value="F:acetylornithine deacetylase activity"/>
    <property type="evidence" value="ECO:0007669"/>
    <property type="project" value="TreeGrafter"/>
</dbReference>
<dbReference type="GO" id="GO:0050897">
    <property type="term" value="F:cobalt ion binding"/>
    <property type="evidence" value="ECO:0007669"/>
    <property type="project" value="UniProtKB-UniRule"/>
</dbReference>
<dbReference type="GO" id="GO:0009014">
    <property type="term" value="F:succinyl-diaminopimelate desuccinylase activity"/>
    <property type="evidence" value="ECO:0007669"/>
    <property type="project" value="UniProtKB-UniRule"/>
</dbReference>
<dbReference type="GO" id="GO:0008270">
    <property type="term" value="F:zinc ion binding"/>
    <property type="evidence" value="ECO:0007669"/>
    <property type="project" value="UniProtKB-UniRule"/>
</dbReference>
<dbReference type="GO" id="GO:0019877">
    <property type="term" value="P:diaminopimelate biosynthetic process"/>
    <property type="evidence" value="ECO:0007669"/>
    <property type="project" value="UniProtKB-UniRule"/>
</dbReference>
<dbReference type="GO" id="GO:0006526">
    <property type="term" value="P:L-arginine biosynthetic process"/>
    <property type="evidence" value="ECO:0007669"/>
    <property type="project" value="TreeGrafter"/>
</dbReference>
<dbReference type="GO" id="GO:0009089">
    <property type="term" value="P:lysine biosynthetic process via diaminopimelate"/>
    <property type="evidence" value="ECO:0007669"/>
    <property type="project" value="UniProtKB-UniRule"/>
</dbReference>
<dbReference type="CDD" id="cd03891">
    <property type="entry name" value="M20_DapE_proteobac"/>
    <property type="match status" value="1"/>
</dbReference>
<dbReference type="Gene3D" id="3.40.630.10">
    <property type="entry name" value="Zn peptidases"/>
    <property type="match status" value="2"/>
</dbReference>
<dbReference type="HAMAP" id="MF_01690">
    <property type="entry name" value="DapE"/>
    <property type="match status" value="1"/>
</dbReference>
<dbReference type="InterPro" id="IPR001261">
    <property type="entry name" value="ArgE/DapE_CS"/>
</dbReference>
<dbReference type="InterPro" id="IPR036264">
    <property type="entry name" value="Bact_exopeptidase_dim_dom"/>
</dbReference>
<dbReference type="InterPro" id="IPR005941">
    <property type="entry name" value="DapE_proteobac"/>
</dbReference>
<dbReference type="InterPro" id="IPR002933">
    <property type="entry name" value="Peptidase_M20"/>
</dbReference>
<dbReference type="InterPro" id="IPR011650">
    <property type="entry name" value="Peptidase_M20_dimer"/>
</dbReference>
<dbReference type="InterPro" id="IPR050072">
    <property type="entry name" value="Peptidase_M20A"/>
</dbReference>
<dbReference type="NCBIfam" id="TIGR01246">
    <property type="entry name" value="dapE_proteo"/>
    <property type="match status" value="1"/>
</dbReference>
<dbReference type="NCBIfam" id="NF009557">
    <property type="entry name" value="PRK13009.1"/>
    <property type="match status" value="1"/>
</dbReference>
<dbReference type="PANTHER" id="PTHR43808">
    <property type="entry name" value="ACETYLORNITHINE DEACETYLASE"/>
    <property type="match status" value="1"/>
</dbReference>
<dbReference type="PANTHER" id="PTHR43808:SF31">
    <property type="entry name" value="N-ACETYL-L-CITRULLINE DEACETYLASE"/>
    <property type="match status" value="1"/>
</dbReference>
<dbReference type="Pfam" id="PF07687">
    <property type="entry name" value="M20_dimer"/>
    <property type="match status" value="1"/>
</dbReference>
<dbReference type="Pfam" id="PF01546">
    <property type="entry name" value="Peptidase_M20"/>
    <property type="match status" value="1"/>
</dbReference>
<dbReference type="SUPFAM" id="SSF55031">
    <property type="entry name" value="Bacterial exopeptidase dimerisation domain"/>
    <property type="match status" value="1"/>
</dbReference>
<dbReference type="SUPFAM" id="SSF53187">
    <property type="entry name" value="Zn-dependent exopeptidases"/>
    <property type="match status" value="1"/>
</dbReference>
<dbReference type="PROSITE" id="PS00759">
    <property type="entry name" value="ARGE_DAPE_CPG2_2"/>
    <property type="match status" value="1"/>
</dbReference>
<evidence type="ECO:0000255" key="1">
    <source>
        <dbReference type="HAMAP-Rule" id="MF_01690"/>
    </source>
</evidence>
<evidence type="ECO:0000305" key="2"/>
<accession>A9HKR2</accession>
<accession>B5ZLL7</accession>
<keyword id="KW-0028">Amino-acid biosynthesis</keyword>
<keyword id="KW-0170">Cobalt</keyword>
<keyword id="KW-0220">Diaminopimelate biosynthesis</keyword>
<keyword id="KW-0378">Hydrolase</keyword>
<keyword id="KW-0457">Lysine biosynthesis</keyword>
<keyword id="KW-0479">Metal-binding</keyword>
<keyword id="KW-1185">Reference proteome</keyword>
<keyword id="KW-0862">Zinc</keyword>
<name>DAPE_GLUDA</name>
<protein>
    <recommendedName>
        <fullName evidence="1">Succinyl-diaminopimelate desuccinylase</fullName>
        <shortName evidence="1">SDAP desuccinylase</shortName>
        <ecNumber evidence="1">3.5.1.18</ecNumber>
    </recommendedName>
    <alternativeName>
        <fullName evidence="1">N-succinyl-LL-2,6-diaminoheptanedioate amidohydrolase</fullName>
    </alternativeName>
</protein>
<sequence length="385" mass="40317">MTGALTPASTPALTLARDLIRAPSVTPDDGGAIGVLTAALRGLGFDVTDLPFGEGPARTPNLFARLGRSGPHLCFAGHTDVVPPGDGGWTSGPFEAALRDGCLYGRGACDMKGGIAAFVGAVARILESGRTLRGSVSLLITGDEEGPATFGTVKVLEWMAAHGQVPDFCVVGEPTNPDHLGDVIKIGRRGSLNARIVVPGIQGHVAYPHRADNPVHRLLAILSDLTARPLDQGTEWFEPSSLQVTTVDVGNEATNVIPGRATARLNIRFNDLHTGQGLADWIRGVAHVHAPGAEVTVQISGEAFRTEPTPELDMLAASIQAVTGRAPRLDTGGGTSDARFISRYCPVAEFGLVGASMHKVDEHVPVADLLALTDIYAAFLERLMG</sequence>
<proteinExistence type="inferred from homology"/>